<name>RNH2_SALA4</name>
<comment type="function">
    <text evidence="1">Endonuclease that specifically degrades the RNA of RNA-DNA hybrids.</text>
</comment>
<comment type="catalytic activity">
    <reaction evidence="1">
        <text>Endonucleolytic cleavage to 5'-phosphomonoester.</text>
        <dbReference type="EC" id="3.1.26.4"/>
    </reaction>
</comment>
<comment type="cofactor">
    <cofactor evidence="1">
        <name>Mn(2+)</name>
        <dbReference type="ChEBI" id="CHEBI:29035"/>
    </cofactor>
    <cofactor evidence="1">
        <name>Mg(2+)</name>
        <dbReference type="ChEBI" id="CHEBI:18420"/>
    </cofactor>
    <text evidence="1">Manganese or magnesium. Binds 1 divalent metal ion per monomer in the absence of substrate. May bind a second metal ion after substrate binding.</text>
</comment>
<comment type="subcellular location">
    <subcellularLocation>
        <location evidence="1">Cytoplasm</location>
    </subcellularLocation>
</comment>
<comment type="similarity">
    <text evidence="1">Belongs to the RNase HII family.</text>
</comment>
<evidence type="ECO:0000255" key="1">
    <source>
        <dbReference type="HAMAP-Rule" id="MF_00052"/>
    </source>
</evidence>
<evidence type="ECO:0000255" key="2">
    <source>
        <dbReference type="PROSITE-ProRule" id="PRU01319"/>
    </source>
</evidence>
<protein>
    <recommendedName>
        <fullName evidence="1">Ribonuclease HII</fullName>
        <shortName evidence="1">RNase HII</shortName>
        <ecNumber evidence="1">3.1.26.4</ecNumber>
    </recommendedName>
</protein>
<reference key="1">
    <citation type="journal article" date="2011" name="J. Bacteriol.">
        <title>Comparative genomics of 28 Salmonella enterica isolates: evidence for CRISPR-mediated adaptive sublineage evolution.</title>
        <authorList>
            <person name="Fricke W.F."/>
            <person name="Mammel M.K."/>
            <person name="McDermott P.F."/>
            <person name="Tartera C."/>
            <person name="White D.G."/>
            <person name="Leclerc J.E."/>
            <person name="Ravel J."/>
            <person name="Cebula T.A."/>
        </authorList>
    </citation>
    <scope>NUCLEOTIDE SEQUENCE [LARGE SCALE GENOMIC DNA]</scope>
    <source>
        <strain>SL483</strain>
    </source>
</reference>
<dbReference type="EC" id="3.1.26.4" evidence="1"/>
<dbReference type="EMBL" id="CP001138">
    <property type="protein sequence ID" value="ACH50655.1"/>
    <property type="molecule type" value="Genomic_DNA"/>
</dbReference>
<dbReference type="RefSeq" id="WP_000569411.1">
    <property type="nucleotide sequence ID" value="NC_011149.1"/>
</dbReference>
<dbReference type="SMR" id="B5F8U4"/>
<dbReference type="KEGG" id="sea:SeAg_B0271"/>
<dbReference type="HOGENOM" id="CLU_036532_3_2_6"/>
<dbReference type="Proteomes" id="UP000008819">
    <property type="component" value="Chromosome"/>
</dbReference>
<dbReference type="GO" id="GO:0005737">
    <property type="term" value="C:cytoplasm"/>
    <property type="evidence" value="ECO:0007669"/>
    <property type="project" value="UniProtKB-SubCell"/>
</dbReference>
<dbReference type="GO" id="GO:0032299">
    <property type="term" value="C:ribonuclease H2 complex"/>
    <property type="evidence" value="ECO:0007669"/>
    <property type="project" value="TreeGrafter"/>
</dbReference>
<dbReference type="GO" id="GO:0030145">
    <property type="term" value="F:manganese ion binding"/>
    <property type="evidence" value="ECO:0007669"/>
    <property type="project" value="UniProtKB-UniRule"/>
</dbReference>
<dbReference type="GO" id="GO:0003723">
    <property type="term" value="F:RNA binding"/>
    <property type="evidence" value="ECO:0007669"/>
    <property type="project" value="InterPro"/>
</dbReference>
<dbReference type="GO" id="GO:0004523">
    <property type="term" value="F:RNA-DNA hybrid ribonuclease activity"/>
    <property type="evidence" value="ECO:0007669"/>
    <property type="project" value="UniProtKB-UniRule"/>
</dbReference>
<dbReference type="GO" id="GO:0043137">
    <property type="term" value="P:DNA replication, removal of RNA primer"/>
    <property type="evidence" value="ECO:0007669"/>
    <property type="project" value="TreeGrafter"/>
</dbReference>
<dbReference type="GO" id="GO:0006298">
    <property type="term" value="P:mismatch repair"/>
    <property type="evidence" value="ECO:0007669"/>
    <property type="project" value="TreeGrafter"/>
</dbReference>
<dbReference type="CDD" id="cd07182">
    <property type="entry name" value="RNase_HII_bacteria_HII_like"/>
    <property type="match status" value="1"/>
</dbReference>
<dbReference type="FunFam" id="3.30.420.10:FF:000006">
    <property type="entry name" value="Ribonuclease HII"/>
    <property type="match status" value="1"/>
</dbReference>
<dbReference type="Gene3D" id="3.30.420.10">
    <property type="entry name" value="Ribonuclease H-like superfamily/Ribonuclease H"/>
    <property type="match status" value="1"/>
</dbReference>
<dbReference type="HAMAP" id="MF_00052_B">
    <property type="entry name" value="RNase_HII_B"/>
    <property type="match status" value="1"/>
</dbReference>
<dbReference type="InterPro" id="IPR022898">
    <property type="entry name" value="RNase_HII"/>
</dbReference>
<dbReference type="InterPro" id="IPR001352">
    <property type="entry name" value="RNase_HII/HIII"/>
</dbReference>
<dbReference type="InterPro" id="IPR024567">
    <property type="entry name" value="RNase_HII/HIII_dom"/>
</dbReference>
<dbReference type="InterPro" id="IPR012337">
    <property type="entry name" value="RNaseH-like_sf"/>
</dbReference>
<dbReference type="InterPro" id="IPR036397">
    <property type="entry name" value="RNaseH_sf"/>
</dbReference>
<dbReference type="NCBIfam" id="NF000594">
    <property type="entry name" value="PRK00015.1-1"/>
    <property type="match status" value="1"/>
</dbReference>
<dbReference type="NCBIfam" id="NF000595">
    <property type="entry name" value="PRK00015.1-3"/>
    <property type="match status" value="1"/>
</dbReference>
<dbReference type="NCBIfam" id="NF000596">
    <property type="entry name" value="PRK00015.1-4"/>
    <property type="match status" value="1"/>
</dbReference>
<dbReference type="PANTHER" id="PTHR10954">
    <property type="entry name" value="RIBONUCLEASE H2 SUBUNIT A"/>
    <property type="match status" value="1"/>
</dbReference>
<dbReference type="PANTHER" id="PTHR10954:SF18">
    <property type="entry name" value="RIBONUCLEASE HII"/>
    <property type="match status" value="1"/>
</dbReference>
<dbReference type="Pfam" id="PF01351">
    <property type="entry name" value="RNase_HII"/>
    <property type="match status" value="1"/>
</dbReference>
<dbReference type="SUPFAM" id="SSF53098">
    <property type="entry name" value="Ribonuclease H-like"/>
    <property type="match status" value="1"/>
</dbReference>
<dbReference type="PROSITE" id="PS51975">
    <property type="entry name" value="RNASE_H_2"/>
    <property type="match status" value="1"/>
</dbReference>
<feature type="chain" id="PRO_1000091648" description="Ribonuclease HII">
    <location>
        <begin position="1"/>
        <end position="198"/>
    </location>
</feature>
<feature type="domain" description="RNase H type-2" evidence="2">
    <location>
        <begin position="10"/>
        <end position="198"/>
    </location>
</feature>
<feature type="binding site" evidence="1">
    <location>
        <position position="16"/>
    </location>
    <ligand>
        <name>a divalent metal cation</name>
        <dbReference type="ChEBI" id="CHEBI:60240"/>
    </ligand>
</feature>
<feature type="binding site" evidence="1">
    <location>
        <position position="17"/>
    </location>
    <ligand>
        <name>a divalent metal cation</name>
        <dbReference type="ChEBI" id="CHEBI:60240"/>
    </ligand>
</feature>
<feature type="binding site" evidence="1">
    <location>
        <position position="108"/>
    </location>
    <ligand>
        <name>a divalent metal cation</name>
        <dbReference type="ChEBI" id="CHEBI:60240"/>
    </ligand>
</feature>
<proteinExistence type="inferred from homology"/>
<sequence>MIEFVYPHTHLVAGVDEVGRGPLVGAVVTAAVILDPARPIVGLNDSKKLSEKRRLSLYDEIKEKALSWSLGRAEAHEIDELNILHATMLAMQRAVAGLHIAPEYVLIDGNRCPALPVPSMAVVKGDSRVAEISAASILAKVTRDAEMAALDIVFPQYGFAQHKGYPTAFHLEKLAQYGATAHHRRSFAPVKRALGLVS</sequence>
<keyword id="KW-0963">Cytoplasm</keyword>
<keyword id="KW-0255">Endonuclease</keyword>
<keyword id="KW-0378">Hydrolase</keyword>
<keyword id="KW-0464">Manganese</keyword>
<keyword id="KW-0479">Metal-binding</keyword>
<keyword id="KW-0540">Nuclease</keyword>
<gene>
    <name evidence="1" type="primary">rnhB</name>
    <name type="ordered locus">SeAg_B0271</name>
</gene>
<accession>B5F8U4</accession>
<organism>
    <name type="scientific">Salmonella agona (strain SL483)</name>
    <dbReference type="NCBI Taxonomy" id="454166"/>
    <lineage>
        <taxon>Bacteria</taxon>
        <taxon>Pseudomonadati</taxon>
        <taxon>Pseudomonadota</taxon>
        <taxon>Gammaproteobacteria</taxon>
        <taxon>Enterobacterales</taxon>
        <taxon>Enterobacteriaceae</taxon>
        <taxon>Salmonella</taxon>
    </lineage>
</organism>